<evidence type="ECO:0000255" key="1">
    <source>
        <dbReference type="HAMAP-Rule" id="MF_00258"/>
    </source>
</evidence>
<reference key="1">
    <citation type="journal article" date="2003" name="Mol. Microbiol.">
        <title>Genome-based analysis of virulence genes in a non-biofilm-forming Staphylococcus epidermidis strain (ATCC 12228).</title>
        <authorList>
            <person name="Zhang Y.-Q."/>
            <person name="Ren S.-X."/>
            <person name="Li H.-L."/>
            <person name="Wang Y.-X."/>
            <person name="Fu G."/>
            <person name="Yang J."/>
            <person name="Qin Z.-Q."/>
            <person name="Miao Y.-G."/>
            <person name="Wang W.-Y."/>
            <person name="Chen R.-S."/>
            <person name="Shen Y."/>
            <person name="Chen Z."/>
            <person name="Yuan Z.-H."/>
            <person name="Zhao G.-P."/>
            <person name="Qu D."/>
            <person name="Danchin A."/>
            <person name="Wen Y.-M."/>
        </authorList>
    </citation>
    <scope>NUCLEOTIDE SEQUENCE [LARGE SCALE GENOMIC DNA]</scope>
    <source>
        <strain>ATCC 12228 / FDA PCI 1200</strain>
    </source>
</reference>
<protein>
    <recommendedName>
        <fullName evidence="1">Glutamate racemase</fullName>
        <ecNumber evidence="1">5.1.1.3</ecNumber>
    </recommendedName>
</protein>
<feature type="chain" id="PRO_0000095513" description="Glutamate racemase">
    <location>
        <begin position="1"/>
        <end position="267"/>
    </location>
</feature>
<feature type="active site" description="Proton donor/acceptor" evidence="1">
    <location>
        <position position="72"/>
    </location>
</feature>
<feature type="active site" description="Proton donor/acceptor" evidence="1">
    <location>
        <position position="184"/>
    </location>
</feature>
<feature type="binding site" evidence="1">
    <location>
        <begin position="9"/>
        <end position="10"/>
    </location>
    <ligand>
        <name>substrate</name>
    </ligand>
</feature>
<feature type="binding site" evidence="1">
    <location>
        <begin position="41"/>
        <end position="42"/>
    </location>
    <ligand>
        <name>substrate</name>
    </ligand>
</feature>
<feature type="binding site" evidence="1">
    <location>
        <begin position="73"/>
        <end position="74"/>
    </location>
    <ligand>
        <name>substrate</name>
    </ligand>
</feature>
<feature type="binding site" evidence="1">
    <location>
        <begin position="185"/>
        <end position="186"/>
    </location>
    <ligand>
        <name>substrate</name>
    </ligand>
</feature>
<organism>
    <name type="scientific">Staphylococcus epidermidis (strain ATCC 12228 / FDA PCI 1200)</name>
    <dbReference type="NCBI Taxonomy" id="176280"/>
    <lineage>
        <taxon>Bacteria</taxon>
        <taxon>Bacillati</taxon>
        <taxon>Bacillota</taxon>
        <taxon>Bacilli</taxon>
        <taxon>Bacillales</taxon>
        <taxon>Staphylococcaceae</taxon>
        <taxon>Staphylococcus</taxon>
    </lineage>
</organism>
<proteinExistence type="inferred from homology"/>
<name>MURI_STAES</name>
<keyword id="KW-0133">Cell shape</keyword>
<keyword id="KW-0961">Cell wall biogenesis/degradation</keyword>
<keyword id="KW-0413">Isomerase</keyword>
<keyword id="KW-0573">Peptidoglycan synthesis</keyword>
<dbReference type="EC" id="5.1.1.3" evidence="1"/>
<dbReference type="EMBL" id="AE015929">
    <property type="protein sequence ID" value="AAO04440.1"/>
    <property type="molecule type" value="Genomic_DNA"/>
</dbReference>
<dbReference type="RefSeq" id="NP_764398.1">
    <property type="nucleotide sequence ID" value="NC_004461.1"/>
</dbReference>
<dbReference type="SMR" id="Q8CPL0"/>
<dbReference type="KEGG" id="sep:SE_0843"/>
<dbReference type="PATRIC" id="fig|176280.10.peg.816"/>
<dbReference type="eggNOG" id="COG0796">
    <property type="taxonomic scope" value="Bacteria"/>
</dbReference>
<dbReference type="HOGENOM" id="CLU_052344_0_2_9"/>
<dbReference type="OrthoDB" id="9801055at2"/>
<dbReference type="UniPathway" id="UPA00219"/>
<dbReference type="Proteomes" id="UP000001411">
    <property type="component" value="Chromosome"/>
</dbReference>
<dbReference type="GO" id="GO:0008881">
    <property type="term" value="F:glutamate racemase activity"/>
    <property type="evidence" value="ECO:0007669"/>
    <property type="project" value="UniProtKB-UniRule"/>
</dbReference>
<dbReference type="GO" id="GO:0071555">
    <property type="term" value="P:cell wall organization"/>
    <property type="evidence" value="ECO:0007669"/>
    <property type="project" value="UniProtKB-KW"/>
</dbReference>
<dbReference type="GO" id="GO:0009252">
    <property type="term" value="P:peptidoglycan biosynthetic process"/>
    <property type="evidence" value="ECO:0007669"/>
    <property type="project" value="UniProtKB-UniRule"/>
</dbReference>
<dbReference type="GO" id="GO:0008360">
    <property type="term" value="P:regulation of cell shape"/>
    <property type="evidence" value="ECO:0007669"/>
    <property type="project" value="UniProtKB-KW"/>
</dbReference>
<dbReference type="FunFam" id="3.40.50.1860:FF:000002">
    <property type="entry name" value="Glutamate racemase"/>
    <property type="match status" value="1"/>
</dbReference>
<dbReference type="Gene3D" id="3.40.50.1860">
    <property type="match status" value="2"/>
</dbReference>
<dbReference type="HAMAP" id="MF_00258">
    <property type="entry name" value="Glu_racemase"/>
    <property type="match status" value="1"/>
</dbReference>
<dbReference type="InterPro" id="IPR015942">
    <property type="entry name" value="Asp/Glu/hydantoin_racemase"/>
</dbReference>
<dbReference type="InterPro" id="IPR001920">
    <property type="entry name" value="Asp/Glu_race"/>
</dbReference>
<dbReference type="InterPro" id="IPR018187">
    <property type="entry name" value="Asp/Glu_racemase_AS_1"/>
</dbReference>
<dbReference type="InterPro" id="IPR033134">
    <property type="entry name" value="Asp/Glu_racemase_AS_2"/>
</dbReference>
<dbReference type="InterPro" id="IPR004391">
    <property type="entry name" value="Glu_race"/>
</dbReference>
<dbReference type="NCBIfam" id="TIGR00067">
    <property type="entry name" value="glut_race"/>
    <property type="match status" value="1"/>
</dbReference>
<dbReference type="NCBIfam" id="NF002035">
    <property type="entry name" value="PRK00865.1-3"/>
    <property type="match status" value="1"/>
</dbReference>
<dbReference type="PANTHER" id="PTHR21198">
    <property type="entry name" value="GLUTAMATE RACEMASE"/>
    <property type="match status" value="1"/>
</dbReference>
<dbReference type="PANTHER" id="PTHR21198:SF2">
    <property type="entry name" value="GLUTAMATE RACEMASE"/>
    <property type="match status" value="1"/>
</dbReference>
<dbReference type="Pfam" id="PF01177">
    <property type="entry name" value="Asp_Glu_race"/>
    <property type="match status" value="1"/>
</dbReference>
<dbReference type="SUPFAM" id="SSF53681">
    <property type="entry name" value="Aspartate/glutamate racemase"/>
    <property type="match status" value="2"/>
</dbReference>
<dbReference type="PROSITE" id="PS00923">
    <property type="entry name" value="ASP_GLU_RACEMASE_1"/>
    <property type="match status" value="1"/>
</dbReference>
<dbReference type="PROSITE" id="PS00924">
    <property type="entry name" value="ASP_GLU_RACEMASE_2"/>
    <property type="match status" value="1"/>
</dbReference>
<gene>
    <name evidence="1" type="primary">murI</name>
    <name type="ordered locus">SE_0843</name>
</gene>
<accession>Q8CPL0</accession>
<comment type="function">
    <text evidence="1">Provides the (R)-glutamate required for cell wall biosynthesis.</text>
</comment>
<comment type="catalytic activity">
    <reaction evidence="1">
        <text>L-glutamate = D-glutamate</text>
        <dbReference type="Rhea" id="RHEA:12813"/>
        <dbReference type="ChEBI" id="CHEBI:29985"/>
        <dbReference type="ChEBI" id="CHEBI:29986"/>
        <dbReference type="EC" id="5.1.1.3"/>
    </reaction>
</comment>
<comment type="pathway">
    <text evidence="1">Cell wall biogenesis; peptidoglycan biosynthesis.</text>
</comment>
<comment type="similarity">
    <text evidence="1">Belongs to the aspartate/glutamate racemases family.</text>
</comment>
<sequence length="267" mass="29859">MNKPIGVIDSGVGGLTVAKEIMRQLPNETIYYLGDIARCPYGPRPGEEVKKFTTELAQKLMEFDIKMLVIACNTATAVALNYLQNILPIPVIGVIEPGARTAIMTTKNQNVLVLGTEGTIKSEAYRTHIKKINPNVNVYSVACPGFVPLVEQMRYKDPTITNIVIHQTLKQWRNSDADTVILGCTHYPLLYQPIYEYFSGTKTVISSGLETAREVSALLTFSNEHASYTEHPQHRFFATGDTTHIKNIIDEWLNMKVEVQRITVDDS</sequence>